<keyword id="KW-0025">Alternative splicing</keyword>
<keyword id="KW-1185">Reference proteome</keyword>
<protein>
    <recommendedName>
        <fullName>Uncharacterized protein C12orf56</fullName>
    </recommendedName>
</protein>
<proteinExistence type="evidence at transcript level"/>
<gene>
    <name type="primary">C12orf56</name>
</gene>
<evidence type="ECO:0000256" key="1">
    <source>
        <dbReference type="SAM" id="MobiDB-lite"/>
    </source>
</evidence>
<evidence type="ECO:0000303" key="2">
    <source>
    </source>
</evidence>
<feature type="chain" id="PRO_0000320926" description="Uncharacterized protein C12orf56">
    <location>
        <begin position="1"/>
        <end position="622"/>
    </location>
</feature>
<feature type="region of interest" description="Disordered" evidence="1">
    <location>
        <begin position="157"/>
        <end position="238"/>
    </location>
</feature>
<feature type="compositionally biased region" description="Basic and acidic residues" evidence="1">
    <location>
        <begin position="157"/>
        <end position="166"/>
    </location>
</feature>
<feature type="splice variant" id="VSP_031745" description="In isoform 2." evidence="2">
    <location>
        <begin position="164"/>
        <end position="323"/>
    </location>
</feature>
<accession>Q8IXR9</accession>
<comment type="alternative products">
    <event type="alternative splicing"/>
    <isoform>
        <id>Q8IXR9-1</id>
        <name>1</name>
        <sequence type="displayed"/>
    </isoform>
    <isoform>
        <id>Q8IXR9-2</id>
        <name>2</name>
        <sequence type="described" ref="VSP_031745"/>
    </isoform>
</comment>
<organism>
    <name type="scientific">Homo sapiens</name>
    <name type="common">Human</name>
    <dbReference type="NCBI Taxonomy" id="9606"/>
    <lineage>
        <taxon>Eukaryota</taxon>
        <taxon>Metazoa</taxon>
        <taxon>Chordata</taxon>
        <taxon>Craniata</taxon>
        <taxon>Vertebrata</taxon>
        <taxon>Euteleostomi</taxon>
        <taxon>Mammalia</taxon>
        <taxon>Eutheria</taxon>
        <taxon>Euarchontoglires</taxon>
        <taxon>Primates</taxon>
        <taxon>Haplorrhini</taxon>
        <taxon>Catarrhini</taxon>
        <taxon>Hominidae</taxon>
        <taxon>Homo</taxon>
    </lineage>
</organism>
<dbReference type="EMBL" id="AC012158">
    <property type="status" value="NOT_ANNOTATED_CDS"/>
    <property type="molecule type" value="Genomic_DNA"/>
</dbReference>
<dbReference type="EMBL" id="AC135279">
    <property type="status" value="NOT_ANNOTATED_CDS"/>
    <property type="molecule type" value="Genomic_DNA"/>
</dbReference>
<dbReference type="EMBL" id="BC039369">
    <property type="protein sequence ID" value="AAH39369.1"/>
    <property type="molecule type" value="mRNA"/>
</dbReference>
<dbReference type="CCDS" id="CCDS44935.1">
    <molecule id="Q8IXR9-2"/>
</dbReference>
<dbReference type="CCDS" id="CCDS61182.1">
    <molecule id="Q8IXR9-1"/>
</dbReference>
<dbReference type="RefSeq" id="NP_001093146.1">
    <molecule id="Q8IXR9-2"/>
    <property type="nucleotide sequence ID" value="NM_001099676.3"/>
</dbReference>
<dbReference type="RefSeq" id="NP_001164104.1">
    <molecule id="Q8IXR9-1"/>
    <property type="nucleotide sequence ID" value="NM_001170633.2"/>
</dbReference>
<dbReference type="BioGRID" id="125452">
    <property type="interactions" value="2"/>
</dbReference>
<dbReference type="FunCoup" id="Q8IXR9">
    <property type="interactions" value="1"/>
</dbReference>
<dbReference type="STRING" id="9606.ENSP00000446101"/>
<dbReference type="iPTMnet" id="Q8IXR9"/>
<dbReference type="PhosphoSitePlus" id="Q8IXR9"/>
<dbReference type="BioMuta" id="C12orf56"/>
<dbReference type="DMDM" id="449081294"/>
<dbReference type="jPOST" id="Q8IXR9"/>
<dbReference type="PaxDb" id="9606-ENSP00000446101"/>
<dbReference type="PeptideAtlas" id="Q8IXR9"/>
<dbReference type="Antibodypedia" id="66385">
    <property type="antibodies" value="26 antibodies from 8 providers"/>
</dbReference>
<dbReference type="DNASU" id="115749"/>
<dbReference type="Ensembl" id="ENST00000333722.9">
    <molecule id="Q8IXR9-2"/>
    <property type="protein sequence ID" value="ENSP00000329698.5"/>
    <property type="gene ID" value="ENSG00000185306.13"/>
</dbReference>
<dbReference type="Ensembl" id="ENST00000543942.7">
    <molecule id="Q8IXR9-1"/>
    <property type="protein sequence ID" value="ENSP00000446101.2"/>
    <property type="gene ID" value="ENSG00000185306.13"/>
</dbReference>
<dbReference type="GeneID" id="115749"/>
<dbReference type="KEGG" id="hsa:115749"/>
<dbReference type="MANE-Select" id="ENST00000543942.7">
    <property type="protein sequence ID" value="ENSP00000446101.2"/>
    <property type="RefSeq nucleotide sequence ID" value="NM_001170633.2"/>
    <property type="RefSeq protein sequence ID" value="NP_001164104.1"/>
</dbReference>
<dbReference type="UCSC" id="uc001ssa.5">
    <molecule id="Q8IXR9-1"/>
    <property type="organism name" value="human"/>
</dbReference>
<dbReference type="AGR" id="HGNC:26967"/>
<dbReference type="CTD" id="115749"/>
<dbReference type="DisGeNET" id="115749"/>
<dbReference type="GeneCards" id="C12orf56"/>
<dbReference type="HGNC" id="HGNC:26967">
    <property type="gene designation" value="C12orf56"/>
</dbReference>
<dbReference type="HPA" id="ENSG00000185306">
    <property type="expression patterns" value="Tissue enhanced (choroid plexus, testis)"/>
</dbReference>
<dbReference type="neXtProt" id="NX_Q8IXR9"/>
<dbReference type="OpenTargets" id="ENSG00000185306"/>
<dbReference type="PharmGKB" id="PA143485385"/>
<dbReference type="VEuPathDB" id="HostDB:ENSG00000185306"/>
<dbReference type="eggNOG" id="ENOG502QVPD">
    <property type="taxonomic scope" value="Eukaryota"/>
</dbReference>
<dbReference type="GeneTree" id="ENSGT00390000018424"/>
<dbReference type="HOGENOM" id="CLU_032455_1_0_1"/>
<dbReference type="InParanoid" id="Q8IXR9"/>
<dbReference type="OMA" id="LFWRSSE"/>
<dbReference type="OrthoDB" id="6022562at2759"/>
<dbReference type="PAN-GO" id="Q8IXR9">
    <property type="GO annotations" value="0 GO annotations based on evolutionary models"/>
</dbReference>
<dbReference type="PhylomeDB" id="Q8IXR9"/>
<dbReference type="TreeFam" id="TF331535"/>
<dbReference type="PathwayCommons" id="Q8IXR9"/>
<dbReference type="SignaLink" id="Q8IXR9"/>
<dbReference type="BioGRID-ORCS" id="115749">
    <property type="hits" value="52 hits in 1118 CRISPR screens"/>
</dbReference>
<dbReference type="ChiTaRS" id="C12orf56">
    <property type="organism name" value="human"/>
</dbReference>
<dbReference type="GenomeRNAi" id="115749"/>
<dbReference type="Pharos" id="Q8IXR9">
    <property type="development level" value="Tdark"/>
</dbReference>
<dbReference type="PRO" id="PR:Q8IXR9"/>
<dbReference type="Proteomes" id="UP000005640">
    <property type="component" value="Chromosome 12"/>
</dbReference>
<dbReference type="RNAct" id="Q8IXR9">
    <property type="molecule type" value="protein"/>
</dbReference>
<dbReference type="Bgee" id="ENSG00000185306">
    <property type="expression patterns" value="Expressed in sperm and 111 other cell types or tissues"/>
</dbReference>
<dbReference type="ExpressionAtlas" id="Q8IXR9">
    <property type="expression patterns" value="baseline and differential"/>
</dbReference>
<dbReference type="InterPro" id="IPR027878">
    <property type="entry name" value="DUF4551"/>
</dbReference>
<dbReference type="PANTHER" id="PTHR35354">
    <property type="entry name" value="RGD1561648"/>
    <property type="match status" value="1"/>
</dbReference>
<dbReference type="PANTHER" id="PTHR35354:SF1">
    <property type="entry name" value="RGD1561648"/>
    <property type="match status" value="1"/>
</dbReference>
<dbReference type="Pfam" id="PF15087">
    <property type="entry name" value="DUF4551"/>
    <property type="match status" value="1"/>
</dbReference>
<sequence length="622" mass="71046">MASPLPSGFPARRNSRLDVFLRRHLPPEVYDAVRAYEPCIVVSNSENHILKYVVLSDRLVYLTENPPKSIRRVVALRDVVAIDLIDDYPEFLSSPDREISQHIRIIYSSTVLKKECKKSNSVRKFLFPFHHTKANNKKVKEEKNGLAFWRSKESRSLKESPLRDQQESSTPSKDSTLCPRPGLKKLSLHGQGAFRPLPSPSRRSSQSAPTTGKAVSEPSCTTNTKEPQGLPDHNSISEIPFKCNGNGNEFYLGNSLLDSPSQSNSNLEKKESELHLYVISTTSSIFLHLKSSWNNYIIKATLLQDPFYASEFSPAIGSQKPYRSEEKIKHFSQLKSELFLKDNSLRRILSLLMELKVAAQKNFILKRLFWKTSDLFYFIVNKLHEYLPESRDKNALQNQSQRVDELVACIEIIQTLVLMFRETETESSRLNTLAAKKGALFNLLVILISEPQIPKSCPVFDIQLVADSALVRMSFDAELQKLILEYTNTATALLYEILLVFQQGNLGLGSTKFAISWIMSFLQSCPPIITFVASIVKQVVRGLSASFQLLSPCQAVLLYQQFYILKSCLRHSRTLAEYIRNNYREEFRYFIHMPALQKRLPLCYPITQPTIQLFHEVLKLVE</sequence>
<name>CL056_HUMAN</name>
<reference key="1">
    <citation type="journal article" date="2006" name="Nature">
        <title>The finished DNA sequence of human chromosome 12.</title>
        <authorList>
            <person name="Scherer S.E."/>
            <person name="Muzny D.M."/>
            <person name="Buhay C.J."/>
            <person name="Chen R."/>
            <person name="Cree A."/>
            <person name="Ding Y."/>
            <person name="Dugan-Rocha S."/>
            <person name="Gill R."/>
            <person name="Gunaratne P."/>
            <person name="Harris R.A."/>
            <person name="Hawes A.C."/>
            <person name="Hernandez J."/>
            <person name="Hodgson A.V."/>
            <person name="Hume J."/>
            <person name="Jackson A."/>
            <person name="Khan Z.M."/>
            <person name="Kovar-Smith C."/>
            <person name="Lewis L.R."/>
            <person name="Lozado R.J."/>
            <person name="Metzker M.L."/>
            <person name="Milosavljevic A."/>
            <person name="Miner G.R."/>
            <person name="Montgomery K.T."/>
            <person name="Morgan M.B."/>
            <person name="Nazareth L.V."/>
            <person name="Scott G."/>
            <person name="Sodergren E."/>
            <person name="Song X.-Z."/>
            <person name="Steffen D."/>
            <person name="Lovering R.C."/>
            <person name="Wheeler D.A."/>
            <person name="Worley K.C."/>
            <person name="Yuan Y."/>
            <person name="Zhang Z."/>
            <person name="Adams C.Q."/>
            <person name="Ansari-Lari M.A."/>
            <person name="Ayele M."/>
            <person name="Brown M.J."/>
            <person name="Chen G."/>
            <person name="Chen Z."/>
            <person name="Clerc-Blankenburg K.P."/>
            <person name="Davis C."/>
            <person name="Delgado O."/>
            <person name="Dinh H.H."/>
            <person name="Draper H."/>
            <person name="Gonzalez-Garay M.L."/>
            <person name="Havlak P."/>
            <person name="Jackson L.R."/>
            <person name="Jacob L.S."/>
            <person name="Kelly S.H."/>
            <person name="Li L."/>
            <person name="Li Z."/>
            <person name="Liu J."/>
            <person name="Liu W."/>
            <person name="Lu J."/>
            <person name="Maheshwari M."/>
            <person name="Nguyen B.-V."/>
            <person name="Okwuonu G.O."/>
            <person name="Pasternak S."/>
            <person name="Perez L.M."/>
            <person name="Plopper F.J.H."/>
            <person name="Santibanez J."/>
            <person name="Shen H."/>
            <person name="Tabor P.E."/>
            <person name="Verduzco D."/>
            <person name="Waldron L."/>
            <person name="Wang Q."/>
            <person name="Williams G.A."/>
            <person name="Zhang J."/>
            <person name="Zhou J."/>
            <person name="Allen C.C."/>
            <person name="Amin A.G."/>
            <person name="Anyalebechi V."/>
            <person name="Bailey M."/>
            <person name="Barbaria J.A."/>
            <person name="Bimage K.E."/>
            <person name="Bryant N.P."/>
            <person name="Burch P.E."/>
            <person name="Burkett C.E."/>
            <person name="Burrell K.L."/>
            <person name="Calderon E."/>
            <person name="Cardenas V."/>
            <person name="Carter K."/>
            <person name="Casias K."/>
            <person name="Cavazos I."/>
            <person name="Cavazos S.R."/>
            <person name="Ceasar H."/>
            <person name="Chacko J."/>
            <person name="Chan S.N."/>
            <person name="Chavez D."/>
            <person name="Christopoulos C."/>
            <person name="Chu J."/>
            <person name="Cockrell R."/>
            <person name="Cox C.D."/>
            <person name="Dang M."/>
            <person name="Dathorne S.R."/>
            <person name="David R."/>
            <person name="Davis C.M."/>
            <person name="Davy-Carroll L."/>
            <person name="Deshazo D.R."/>
            <person name="Donlin J.E."/>
            <person name="D'Souza L."/>
            <person name="Eaves K.A."/>
            <person name="Egan A."/>
            <person name="Emery-Cohen A.J."/>
            <person name="Escotto M."/>
            <person name="Flagg N."/>
            <person name="Forbes L.D."/>
            <person name="Gabisi A.M."/>
            <person name="Garza M."/>
            <person name="Hamilton C."/>
            <person name="Henderson N."/>
            <person name="Hernandez O."/>
            <person name="Hines S."/>
            <person name="Hogues M.E."/>
            <person name="Huang M."/>
            <person name="Idlebird D.G."/>
            <person name="Johnson R."/>
            <person name="Jolivet A."/>
            <person name="Jones S."/>
            <person name="Kagan R."/>
            <person name="King L.M."/>
            <person name="Leal B."/>
            <person name="Lebow H."/>
            <person name="Lee S."/>
            <person name="LeVan J.M."/>
            <person name="Lewis L.C."/>
            <person name="London P."/>
            <person name="Lorensuhewa L.M."/>
            <person name="Loulseged H."/>
            <person name="Lovett D.A."/>
            <person name="Lucier A."/>
            <person name="Lucier R.L."/>
            <person name="Ma J."/>
            <person name="Madu R.C."/>
            <person name="Mapua P."/>
            <person name="Martindale A.D."/>
            <person name="Martinez E."/>
            <person name="Massey E."/>
            <person name="Mawhiney S."/>
            <person name="Meador M.G."/>
            <person name="Mendez S."/>
            <person name="Mercado C."/>
            <person name="Mercado I.C."/>
            <person name="Merritt C.E."/>
            <person name="Miner Z.L."/>
            <person name="Minja E."/>
            <person name="Mitchell T."/>
            <person name="Mohabbat F."/>
            <person name="Mohabbat K."/>
            <person name="Montgomery B."/>
            <person name="Moore N."/>
            <person name="Morris S."/>
            <person name="Munidasa M."/>
            <person name="Ngo R.N."/>
            <person name="Nguyen N.B."/>
            <person name="Nickerson E."/>
            <person name="Nwaokelemeh O.O."/>
            <person name="Nwokenkwo S."/>
            <person name="Obregon M."/>
            <person name="Oguh M."/>
            <person name="Oragunye N."/>
            <person name="Oviedo R.J."/>
            <person name="Parish B.J."/>
            <person name="Parker D.N."/>
            <person name="Parrish J."/>
            <person name="Parks K.L."/>
            <person name="Paul H.A."/>
            <person name="Payton B.A."/>
            <person name="Perez A."/>
            <person name="Perrin W."/>
            <person name="Pickens A."/>
            <person name="Primus E.L."/>
            <person name="Pu L.-L."/>
            <person name="Puazo M."/>
            <person name="Quiles M.M."/>
            <person name="Quiroz J.B."/>
            <person name="Rabata D."/>
            <person name="Reeves K."/>
            <person name="Ruiz S.J."/>
            <person name="Shao H."/>
            <person name="Sisson I."/>
            <person name="Sonaike T."/>
            <person name="Sorelle R.P."/>
            <person name="Sutton A.E."/>
            <person name="Svatek A.F."/>
            <person name="Svetz L.A."/>
            <person name="Tamerisa K.S."/>
            <person name="Taylor T.R."/>
            <person name="Teague B."/>
            <person name="Thomas N."/>
            <person name="Thorn R.D."/>
            <person name="Trejos Z.Y."/>
            <person name="Trevino B.K."/>
            <person name="Ukegbu O.N."/>
            <person name="Urban J.B."/>
            <person name="Vasquez L.I."/>
            <person name="Vera V.A."/>
            <person name="Villasana D.M."/>
            <person name="Wang L."/>
            <person name="Ward-Moore S."/>
            <person name="Warren J.T."/>
            <person name="Wei X."/>
            <person name="White F."/>
            <person name="Williamson A.L."/>
            <person name="Wleczyk R."/>
            <person name="Wooden H.S."/>
            <person name="Wooden S.H."/>
            <person name="Yen J."/>
            <person name="Yoon L."/>
            <person name="Yoon V."/>
            <person name="Zorrilla S.E."/>
            <person name="Nelson D."/>
            <person name="Kucherlapati R."/>
            <person name="Weinstock G."/>
            <person name="Gibbs R.A."/>
        </authorList>
    </citation>
    <scope>NUCLEOTIDE SEQUENCE [LARGE SCALE GENOMIC DNA]</scope>
</reference>
<reference key="2">
    <citation type="journal article" date="2004" name="Genome Res.">
        <title>The status, quality, and expansion of the NIH full-length cDNA project: the Mammalian Gene Collection (MGC).</title>
        <authorList>
            <consortium name="The MGC Project Team"/>
        </authorList>
    </citation>
    <scope>NUCLEOTIDE SEQUENCE [LARGE SCALE MRNA] OF 19-622 (ISOFORM 2)</scope>
    <source>
        <tissue>Testis</tissue>
    </source>
</reference>